<reference key="1">
    <citation type="journal article" date="2008" name="Appl. Environ. Microbiol.">
        <title>Genome of the epsilonproteobacterial chemolithoautotroph Sulfurimonas denitrificans.</title>
        <authorList>
            <person name="Sievert S.M."/>
            <person name="Scott K.M."/>
            <person name="Klotz M.G."/>
            <person name="Chain P.S.G."/>
            <person name="Hauser L.J."/>
            <person name="Hemp J."/>
            <person name="Huegler M."/>
            <person name="Land M."/>
            <person name="Lapidus A."/>
            <person name="Larimer F.W."/>
            <person name="Lucas S."/>
            <person name="Malfatti S.A."/>
            <person name="Meyer F."/>
            <person name="Paulsen I.T."/>
            <person name="Ren Q."/>
            <person name="Simon J."/>
            <person name="Bailey K."/>
            <person name="Diaz E."/>
            <person name="Fitzpatrick K.A."/>
            <person name="Glover B."/>
            <person name="Gwatney N."/>
            <person name="Korajkic A."/>
            <person name="Long A."/>
            <person name="Mobberley J.M."/>
            <person name="Pantry S.N."/>
            <person name="Pazder G."/>
            <person name="Peterson S."/>
            <person name="Quintanilla J.D."/>
            <person name="Sprinkle R."/>
            <person name="Stephens J."/>
            <person name="Thomas P."/>
            <person name="Vaughn R."/>
            <person name="Weber M.J."/>
            <person name="Wooten L.L."/>
        </authorList>
    </citation>
    <scope>NUCLEOTIDE SEQUENCE [LARGE SCALE GENOMIC DNA]</scope>
    <source>
        <strain>ATCC 33889 / DSM 1251</strain>
    </source>
</reference>
<gene>
    <name evidence="1" type="primary">cysS</name>
    <name type="ordered locus">Suden_1212</name>
</gene>
<evidence type="ECO:0000255" key="1">
    <source>
        <dbReference type="HAMAP-Rule" id="MF_00041"/>
    </source>
</evidence>
<comment type="catalytic activity">
    <reaction evidence="1">
        <text>tRNA(Cys) + L-cysteine + ATP = L-cysteinyl-tRNA(Cys) + AMP + diphosphate</text>
        <dbReference type="Rhea" id="RHEA:17773"/>
        <dbReference type="Rhea" id="RHEA-COMP:9661"/>
        <dbReference type="Rhea" id="RHEA-COMP:9679"/>
        <dbReference type="ChEBI" id="CHEBI:30616"/>
        <dbReference type="ChEBI" id="CHEBI:33019"/>
        <dbReference type="ChEBI" id="CHEBI:35235"/>
        <dbReference type="ChEBI" id="CHEBI:78442"/>
        <dbReference type="ChEBI" id="CHEBI:78517"/>
        <dbReference type="ChEBI" id="CHEBI:456215"/>
        <dbReference type="EC" id="6.1.1.16"/>
    </reaction>
</comment>
<comment type="cofactor">
    <cofactor evidence="1">
        <name>Zn(2+)</name>
        <dbReference type="ChEBI" id="CHEBI:29105"/>
    </cofactor>
    <text evidence="1">Binds 1 zinc ion per subunit.</text>
</comment>
<comment type="subunit">
    <text evidence="1">Monomer.</text>
</comment>
<comment type="subcellular location">
    <subcellularLocation>
        <location evidence="1">Cytoplasm</location>
    </subcellularLocation>
</comment>
<comment type="similarity">
    <text evidence="1">Belongs to the class-I aminoacyl-tRNA synthetase family.</text>
</comment>
<dbReference type="EC" id="6.1.1.16" evidence="1"/>
<dbReference type="EMBL" id="CP000153">
    <property type="protein sequence ID" value="ABB44490.1"/>
    <property type="molecule type" value="Genomic_DNA"/>
</dbReference>
<dbReference type="RefSeq" id="WP_011372842.1">
    <property type="nucleotide sequence ID" value="NC_007575.1"/>
</dbReference>
<dbReference type="SMR" id="Q30R91"/>
<dbReference type="STRING" id="326298.Suden_1212"/>
<dbReference type="KEGG" id="tdn:Suden_1212"/>
<dbReference type="eggNOG" id="COG0215">
    <property type="taxonomic scope" value="Bacteria"/>
</dbReference>
<dbReference type="HOGENOM" id="CLU_013528_0_1_7"/>
<dbReference type="OrthoDB" id="9815130at2"/>
<dbReference type="Proteomes" id="UP000002714">
    <property type="component" value="Chromosome"/>
</dbReference>
<dbReference type="GO" id="GO:0005829">
    <property type="term" value="C:cytosol"/>
    <property type="evidence" value="ECO:0007669"/>
    <property type="project" value="TreeGrafter"/>
</dbReference>
<dbReference type="GO" id="GO:0005524">
    <property type="term" value="F:ATP binding"/>
    <property type="evidence" value="ECO:0007669"/>
    <property type="project" value="UniProtKB-UniRule"/>
</dbReference>
<dbReference type="GO" id="GO:0004817">
    <property type="term" value="F:cysteine-tRNA ligase activity"/>
    <property type="evidence" value="ECO:0007669"/>
    <property type="project" value="UniProtKB-UniRule"/>
</dbReference>
<dbReference type="GO" id="GO:0008270">
    <property type="term" value="F:zinc ion binding"/>
    <property type="evidence" value="ECO:0007669"/>
    <property type="project" value="UniProtKB-UniRule"/>
</dbReference>
<dbReference type="GO" id="GO:0006423">
    <property type="term" value="P:cysteinyl-tRNA aminoacylation"/>
    <property type="evidence" value="ECO:0007669"/>
    <property type="project" value="UniProtKB-UniRule"/>
</dbReference>
<dbReference type="CDD" id="cd00672">
    <property type="entry name" value="CysRS_core"/>
    <property type="match status" value="1"/>
</dbReference>
<dbReference type="Gene3D" id="1.20.120.1910">
    <property type="entry name" value="Cysteine-tRNA ligase, C-terminal anti-codon recognition domain"/>
    <property type="match status" value="1"/>
</dbReference>
<dbReference type="Gene3D" id="3.40.50.620">
    <property type="entry name" value="HUPs"/>
    <property type="match status" value="1"/>
</dbReference>
<dbReference type="HAMAP" id="MF_00041">
    <property type="entry name" value="Cys_tRNA_synth"/>
    <property type="match status" value="1"/>
</dbReference>
<dbReference type="InterPro" id="IPR015803">
    <property type="entry name" value="Cys-tRNA-ligase"/>
</dbReference>
<dbReference type="InterPro" id="IPR024909">
    <property type="entry name" value="Cys-tRNA/MSH_ligase"/>
</dbReference>
<dbReference type="InterPro" id="IPR014729">
    <property type="entry name" value="Rossmann-like_a/b/a_fold"/>
</dbReference>
<dbReference type="InterPro" id="IPR032678">
    <property type="entry name" value="tRNA-synt_1_cat_dom"/>
</dbReference>
<dbReference type="InterPro" id="IPR009080">
    <property type="entry name" value="tRNAsynth_Ia_anticodon-bd"/>
</dbReference>
<dbReference type="NCBIfam" id="TIGR00435">
    <property type="entry name" value="cysS"/>
    <property type="match status" value="1"/>
</dbReference>
<dbReference type="PANTHER" id="PTHR10890:SF3">
    <property type="entry name" value="CYSTEINE--TRNA LIGASE, CYTOPLASMIC"/>
    <property type="match status" value="1"/>
</dbReference>
<dbReference type="PANTHER" id="PTHR10890">
    <property type="entry name" value="CYSTEINYL-TRNA SYNTHETASE"/>
    <property type="match status" value="1"/>
</dbReference>
<dbReference type="Pfam" id="PF01406">
    <property type="entry name" value="tRNA-synt_1e"/>
    <property type="match status" value="1"/>
</dbReference>
<dbReference type="PRINTS" id="PR00983">
    <property type="entry name" value="TRNASYNTHCYS"/>
</dbReference>
<dbReference type="SUPFAM" id="SSF47323">
    <property type="entry name" value="Anticodon-binding domain of a subclass of class I aminoacyl-tRNA synthetases"/>
    <property type="match status" value="1"/>
</dbReference>
<dbReference type="SUPFAM" id="SSF52374">
    <property type="entry name" value="Nucleotidylyl transferase"/>
    <property type="match status" value="1"/>
</dbReference>
<protein>
    <recommendedName>
        <fullName evidence="1">Cysteine--tRNA ligase</fullName>
        <ecNumber evidence="1">6.1.1.16</ecNumber>
    </recommendedName>
    <alternativeName>
        <fullName evidence="1">Cysteinyl-tRNA synthetase</fullName>
        <shortName evidence="1">CysRS</shortName>
    </alternativeName>
</protein>
<feature type="chain" id="PRO_0000240972" description="Cysteine--tRNA ligase">
    <location>
        <begin position="1"/>
        <end position="466"/>
    </location>
</feature>
<feature type="short sequence motif" description="'HIGH' region">
    <location>
        <begin position="29"/>
        <end position="39"/>
    </location>
</feature>
<feature type="short sequence motif" description="'KMSKS' region">
    <location>
        <begin position="270"/>
        <end position="274"/>
    </location>
</feature>
<feature type="binding site" evidence="1">
    <location>
        <position position="27"/>
    </location>
    <ligand>
        <name>Zn(2+)</name>
        <dbReference type="ChEBI" id="CHEBI:29105"/>
    </ligand>
</feature>
<feature type="binding site" evidence="1">
    <location>
        <position position="208"/>
    </location>
    <ligand>
        <name>Zn(2+)</name>
        <dbReference type="ChEBI" id="CHEBI:29105"/>
    </ligand>
</feature>
<feature type="binding site" evidence="1">
    <location>
        <position position="238"/>
    </location>
    <ligand>
        <name>Zn(2+)</name>
        <dbReference type="ChEBI" id="CHEBI:29105"/>
    </ligand>
</feature>
<feature type="binding site" evidence="1">
    <location>
        <position position="242"/>
    </location>
    <ligand>
        <name>Zn(2+)</name>
        <dbReference type="ChEBI" id="CHEBI:29105"/>
    </ligand>
</feature>
<feature type="binding site" evidence="1">
    <location>
        <position position="273"/>
    </location>
    <ligand>
        <name>ATP</name>
        <dbReference type="ChEBI" id="CHEBI:30616"/>
    </ligand>
</feature>
<name>SYC_SULDN</name>
<proteinExistence type="inferred from homology"/>
<organism>
    <name type="scientific">Sulfurimonas denitrificans (strain ATCC 33889 / DSM 1251)</name>
    <name type="common">Thiomicrospira denitrificans (strain ATCC 33889 / DSM 1251)</name>
    <dbReference type="NCBI Taxonomy" id="326298"/>
    <lineage>
        <taxon>Bacteria</taxon>
        <taxon>Pseudomonadati</taxon>
        <taxon>Campylobacterota</taxon>
        <taxon>Epsilonproteobacteria</taxon>
        <taxon>Campylobacterales</taxon>
        <taxon>Sulfurimonadaceae</taxon>
        <taxon>Sulfurimonas</taxon>
    </lineage>
</organism>
<accession>Q30R91</accession>
<sequence>MFIFDSAKKIKREFIPQEQGKVSLYVCGPTVYDDAHLGHAKSALVFDLLCRVLNANGYEVTYARNITDIDDKIINRAQEQNKTIKEVTDFYTDAYHKEMALLGISRPDIEPKATESLDAMYALVQKLLDNKHAYTTDDGDVYFDTSSDSKYLTLSNRVQDESEKLQRVQSSSQKRNPADFALWKSIHDESVTFGSPFGKGRPGWHLECSAMIEKHLSKPNAKFAVDIHGGGADLLFPHHENEAAQTRCATDHALAAYWMHNGFVNIDGEKMSKSLGNSFFLKDALKIYDGEVLRFYLLSTHYRSNFNFNEEDLATAKKRLDKIYRLKKRLFGVTYEDEKTDFKKELLETLSDDLNISASLALIEEMITRANETLDTAGKHKELKREALSNLSFIEKILGFGIKNPYEYFQFGVNEETKTEIAKLIEKRAEAKKSKDFAASDMLRDKILAYGVNLMDTPQGSFWEKI</sequence>
<keyword id="KW-0030">Aminoacyl-tRNA synthetase</keyword>
<keyword id="KW-0067">ATP-binding</keyword>
<keyword id="KW-0963">Cytoplasm</keyword>
<keyword id="KW-0436">Ligase</keyword>
<keyword id="KW-0479">Metal-binding</keyword>
<keyword id="KW-0547">Nucleotide-binding</keyword>
<keyword id="KW-0648">Protein biosynthesis</keyword>
<keyword id="KW-1185">Reference proteome</keyword>
<keyword id="KW-0862">Zinc</keyword>